<accession>P24295</accession>
<dbReference type="EC" id="1.4.1.2"/>
<dbReference type="EMBL" id="Z11747">
    <property type="protein sequence ID" value="CAA77805.1"/>
    <property type="molecule type" value="Genomic_DNA"/>
</dbReference>
<dbReference type="PIR" id="S22403">
    <property type="entry name" value="S22403"/>
</dbReference>
<dbReference type="PDB" id="1AUP">
    <property type="method" value="X-ray"/>
    <property type="resolution" value="2.50 A"/>
    <property type="chains" value="A=2-450"/>
</dbReference>
<dbReference type="PDB" id="1BGV">
    <property type="method" value="X-ray"/>
    <property type="resolution" value="1.90 A"/>
    <property type="chains" value="A=2-450"/>
</dbReference>
<dbReference type="PDB" id="1HRD">
    <property type="method" value="X-ray"/>
    <property type="resolution" value="1.96 A"/>
    <property type="chains" value="A/B/C=2-450"/>
</dbReference>
<dbReference type="PDB" id="1K89">
    <property type="method" value="X-ray"/>
    <property type="resolution" value="2.05 A"/>
    <property type="chains" value="A=2-450"/>
</dbReference>
<dbReference type="PDB" id="2YFH">
    <property type="method" value="X-ray"/>
    <property type="resolution" value="2.70 A"/>
    <property type="chains" value="A/B/C/D/E/F=1-450"/>
</dbReference>
<dbReference type="PDBsum" id="1AUP"/>
<dbReference type="PDBsum" id="1BGV"/>
<dbReference type="PDBsum" id="1HRD"/>
<dbReference type="PDBsum" id="1K89"/>
<dbReference type="PDBsum" id="2YFH"/>
<dbReference type="SMR" id="P24295"/>
<dbReference type="eggNOG" id="COG0334">
    <property type="taxonomic scope" value="Bacteria"/>
</dbReference>
<dbReference type="BRENDA" id="1.4.1.2">
    <property type="organism ID" value="772"/>
</dbReference>
<dbReference type="SABIO-RK" id="P24295"/>
<dbReference type="UniPathway" id="UPA00533">
    <property type="reaction ID" value="UER00591"/>
</dbReference>
<dbReference type="EvolutionaryTrace" id="P24295"/>
<dbReference type="GO" id="GO:0005829">
    <property type="term" value="C:cytosol"/>
    <property type="evidence" value="ECO:0007669"/>
    <property type="project" value="TreeGrafter"/>
</dbReference>
<dbReference type="GO" id="GO:0004352">
    <property type="term" value="F:glutamate dehydrogenase (NAD+) activity"/>
    <property type="evidence" value="ECO:0000250"/>
    <property type="project" value="UniProtKB"/>
</dbReference>
<dbReference type="GO" id="GO:0004354">
    <property type="term" value="F:glutamate dehydrogenase (NADP+) activity"/>
    <property type="evidence" value="ECO:0007669"/>
    <property type="project" value="TreeGrafter"/>
</dbReference>
<dbReference type="GO" id="GO:0006520">
    <property type="term" value="P:amino acid metabolic process"/>
    <property type="evidence" value="ECO:0000250"/>
    <property type="project" value="UniProtKB"/>
</dbReference>
<dbReference type="GO" id="GO:0006537">
    <property type="term" value="P:glutamate biosynthetic process"/>
    <property type="evidence" value="ECO:0007669"/>
    <property type="project" value="TreeGrafter"/>
</dbReference>
<dbReference type="GO" id="GO:0019552">
    <property type="term" value="P:glutamate catabolic process via 2-hydroxyglutarate"/>
    <property type="evidence" value="ECO:0007669"/>
    <property type="project" value="UniProtKB-UniPathway"/>
</dbReference>
<dbReference type="CDD" id="cd05313">
    <property type="entry name" value="NAD_bind_2_Glu_DH"/>
    <property type="match status" value="1"/>
</dbReference>
<dbReference type="FunFam" id="1.10.285.10:FF:000001">
    <property type="entry name" value="Glutamate dehydrogenase"/>
    <property type="match status" value="1"/>
</dbReference>
<dbReference type="FunFam" id="1.10.285.10:FF:000008">
    <property type="entry name" value="Glutamate dehydrogenase"/>
    <property type="match status" value="1"/>
</dbReference>
<dbReference type="FunFam" id="3.40.50.10860:FF:000002">
    <property type="entry name" value="Glutamate dehydrogenase"/>
    <property type="match status" value="1"/>
</dbReference>
<dbReference type="FunFam" id="3.40.50.720:FF:000030">
    <property type="entry name" value="Glutamate dehydrogenase"/>
    <property type="match status" value="1"/>
</dbReference>
<dbReference type="Gene3D" id="1.10.285.10">
    <property type="entry name" value="Glutamate Dehydrogenase, chain A, domain 3"/>
    <property type="match status" value="2"/>
</dbReference>
<dbReference type="Gene3D" id="3.40.50.10860">
    <property type="entry name" value="Leucine Dehydrogenase, chain A, domain 1"/>
    <property type="match status" value="1"/>
</dbReference>
<dbReference type="Gene3D" id="3.40.50.720">
    <property type="entry name" value="NAD(P)-binding Rossmann-like Domain"/>
    <property type="match status" value="1"/>
</dbReference>
<dbReference type="InterPro" id="IPR046346">
    <property type="entry name" value="Aminoacid_DH-like_N_sf"/>
</dbReference>
<dbReference type="InterPro" id="IPR006095">
    <property type="entry name" value="Glu/Leu/Phe/Val/Trp_DH"/>
</dbReference>
<dbReference type="InterPro" id="IPR006096">
    <property type="entry name" value="Glu/Leu/Phe/Val/Trp_DH_C"/>
</dbReference>
<dbReference type="InterPro" id="IPR006097">
    <property type="entry name" value="Glu/Leu/Phe/Val/Trp_DH_dimer"/>
</dbReference>
<dbReference type="InterPro" id="IPR033524">
    <property type="entry name" value="Glu/Leu/Phe/Val_DH_AS"/>
</dbReference>
<dbReference type="InterPro" id="IPR014362">
    <property type="entry name" value="Glu_DH"/>
</dbReference>
<dbReference type="InterPro" id="IPR050724">
    <property type="entry name" value="Glu_Leu_Phe_Val_DH"/>
</dbReference>
<dbReference type="InterPro" id="IPR036291">
    <property type="entry name" value="NAD(P)-bd_dom_sf"/>
</dbReference>
<dbReference type="InterPro" id="IPR033922">
    <property type="entry name" value="NAD_bind_Glu_DH"/>
</dbReference>
<dbReference type="NCBIfam" id="NF006929">
    <property type="entry name" value="PRK09414.1"/>
    <property type="match status" value="1"/>
</dbReference>
<dbReference type="PANTHER" id="PTHR43571">
    <property type="entry name" value="NADP-SPECIFIC GLUTAMATE DEHYDROGENASE 1-RELATED"/>
    <property type="match status" value="1"/>
</dbReference>
<dbReference type="PANTHER" id="PTHR43571:SF1">
    <property type="entry name" value="NADP-SPECIFIC GLUTAMATE DEHYDROGENASE 1-RELATED"/>
    <property type="match status" value="1"/>
</dbReference>
<dbReference type="Pfam" id="PF00208">
    <property type="entry name" value="ELFV_dehydrog"/>
    <property type="match status" value="1"/>
</dbReference>
<dbReference type="Pfam" id="PF02812">
    <property type="entry name" value="ELFV_dehydrog_N"/>
    <property type="match status" value="1"/>
</dbReference>
<dbReference type="PIRSF" id="PIRSF000185">
    <property type="entry name" value="Glu_DH"/>
    <property type="match status" value="1"/>
</dbReference>
<dbReference type="PRINTS" id="PR00082">
    <property type="entry name" value="GLFDHDRGNASE"/>
</dbReference>
<dbReference type="SMART" id="SM00839">
    <property type="entry name" value="ELFV_dehydrog"/>
    <property type="match status" value="1"/>
</dbReference>
<dbReference type="SUPFAM" id="SSF53223">
    <property type="entry name" value="Aminoacid dehydrogenase-like, N-terminal domain"/>
    <property type="match status" value="1"/>
</dbReference>
<dbReference type="SUPFAM" id="SSF51735">
    <property type="entry name" value="NAD(P)-binding Rossmann-fold domains"/>
    <property type="match status" value="1"/>
</dbReference>
<dbReference type="PROSITE" id="PS00074">
    <property type="entry name" value="GLFV_DEHYDROGENASE"/>
    <property type="match status" value="1"/>
</dbReference>
<feature type="initiator methionine" description="Removed" evidence="4">
    <location>
        <position position="1"/>
    </location>
</feature>
<feature type="chain" id="PRO_0000182738" description="NAD-specific glutamate dehydrogenase">
    <location>
        <begin position="2"/>
        <end position="450"/>
    </location>
</feature>
<feature type="active site" description="Proton donor" evidence="2 5">
    <location>
        <position position="126"/>
    </location>
</feature>
<feature type="binding site" evidence="5">
    <location>
        <position position="90"/>
    </location>
    <ligand>
        <name>substrate</name>
    </ligand>
</feature>
<feature type="binding site" evidence="5">
    <location>
        <position position="111"/>
    </location>
    <ligand>
        <name>substrate</name>
    </ligand>
</feature>
<feature type="binding site" evidence="5">
    <location>
        <position position="114"/>
    </location>
    <ligand>
        <name>substrate</name>
    </ligand>
</feature>
<feature type="binding site" evidence="5">
    <location>
        <position position="165"/>
    </location>
    <ligand>
        <name>substrate</name>
    </ligand>
</feature>
<feature type="binding site" evidence="9">
    <location>
        <position position="210"/>
    </location>
    <ligand>
        <name>NAD(+)</name>
        <dbReference type="ChEBI" id="CHEBI:57540"/>
    </ligand>
</feature>
<feature type="binding site" evidence="9">
    <location>
        <position position="241"/>
    </location>
    <ligand>
        <name>NAD(+)</name>
        <dbReference type="ChEBI" id="CHEBI:57540"/>
    </ligand>
</feature>
<feature type="binding site" evidence="5">
    <location>
        <position position="381"/>
    </location>
    <ligand>
        <name>substrate</name>
    </ligand>
</feature>
<feature type="site" description="Important for catalysis" evidence="1">
    <location>
        <position position="166"/>
    </location>
</feature>
<feature type="mutagenesis site" description="Increased substrate activity for methionine and norleucine but negligible activity with either glutamate or leucine. Dramatic reduction in the dehydrogenase activity with glutamate as the substrate; when associated with V-381." evidence="6 7">
    <original>K</original>
    <variation>L</variation>
    <location>
        <position position="90"/>
    </location>
</feature>
<feature type="mutagenesis site" description="Dramatic reduction in the dehydrogenase activity. Specific activity is decreased 1000-fold in the reductive amination reaction and 100000-fold for oxidative deamination." evidence="4">
    <original>D</original>
    <variation>S</variation>
    <location>
        <position position="166"/>
    </location>
</feature>
<feature type="mutagenesis site" description="Dramatic reduction in the dehydrogenase activity with glutamate as the substrate; when associated with L-90." evidence="6">
    <original>S</original>
    <variation>V</variation>
    <location>
        <position position="381"/>
    </location>
</feature>
<feature type="sequence conflict" description="In Ref. 5; AA sequence." evidence="9" ref="5">
    <original>Y</original>
    <variation>S</variation>
    <location>
        <position position="43"/>
    </location>
</feature>
<feature type="sequence conflict" description="In Ref. 5; AA sequence." evidence="9" ref="5">
    <original>G</original>
    <variation>V</variation>
    <location>
        <position position="165"/>
    </location>
</feature>
<feature type="sequence conflict" description="In Ref. 5; AA sequence." evidence="9" ref="5">
    <original>D</original>
    <variation>A</variation>
    <location>
        <position position="326"/>
    </location>
</feature>
<feature type="helix" evidence="10">
    <location>
        <begin position="3"/>
        <end position="15"/>
    </location>
</feature>
<feature type="turn" evidence="10">
    <location>
        <begin position="16"/>
        <end position="18"/>
    </location>
</feature>
<feature type="helix" evidence="10">
    <location>
        <begin position="20"/>
        <end position="31"/>
    </location>
</feature>
<feature type="helix" evidence="10">
    <location>
        <begin position="34"/>
        <end position="38"/>
    </location>
</feature>
<feature type="helix" evidence="10">
    <location>
        <begin position="41"/>
        <end position="45"/>
    </location>
</feature>
<feature type="helix" evidence="10">
    <location>
        <begin position="48"/>
        <end position="52"/>
    </location>
</feature>
<feature type="strand" evidence="10">
    <location>
        <begin position="56"/>
        <end position="66"/>
    </location>
</feature>
<feature type="strand" evidence="10">
    <location>
        <begin position="72"/>
        <end position="83"/>
    </location>
</feature>
<feature type="strand" evidence="10">
    <location>
        <begin position="85"/>
        <end position="95"/>
    </location>
</feature>
<feature type="helix" evidence="10">
    <location>
        <begin position="101"/>
        <end position="117"/>
    </location>
</feature>
<feature type="strand" evidence="10">
    <location>
        <begin position="119"/>
        <end position="121"/>
    </location>
</feature>
<feature type="strand" evidence="10">
    <location>
        <begin position="124"/>
        <end position="130"/>
    </location>
</feature>
<feature type="helix" evidence="10">
    <location>
        <begin position="138"/>
        <end position="152"/>
    </location>
</feature>
<feature type="helix" evidence="10">
    <location>
        <begin position="153"/>
        <end position="155"/>
    </location>
</feature>
<feature type="turn" evidence="10">
    <location>
        <begin position="158"/>
        <end position="160"/>
    </location>
</feature>
<feature type="strand" evidence="10">
    <location>
        <begin position="161"/>
        <end position="164"/>
    </location>
</feature>
<feature type="helix" evidence="10">
    <location>
        <begin position="171"/>
        <end position="185"/>
    </location>
</feature>
<feature type="helix" evidence="10">
    <location>
        <begin position="190"/>
        <end position="192"/>
    </location>
</feature>
<feature type="strand" evidence="10">
    <location>
        <begin position="193"/>
        <end position="195"/>
    </location>
</feature>
<feature type="helix" evidence="10">
    <location>
        <begin position="198"/>
        <end position="200"/>
    </location>
</feature>
<feature type="turn" evidence="10">
    <location>
        <begin position="204"/>
        <end position="208"/>
    </location>
</feature>
<feature type="helix" evidence="10">
    <location>
        <begin position="209"/>
        <end position="224"/>
    </location>
</feature>
<feature type="strand" evidence="10">
    <location>
        <begin position="233"/>
        <end position="236"/>
    </location>
</feature>
<feature type="helix" evidence="10">
    <location>
        <begin position="241"/>
        <end position="253"/>
    </location>
</feature>
<feature type="strand" evidence="10">
    <location>
        <begin position="259"/>
        <end position="262"/>
    </location>
</feature>
<feature type="strand" evidence="10">
    <location>
        <begin position="265"/>
        <end position="268"/>
    </location>
</feature>
<feature type="helix" evidence="10">
    <location>
        <begin position="276"/>
        <end position="288"/>
    </location>
</feature>
<feature type="helix" evidence="10">
    <location>
        <begin position="294"/>
        <end position="300"/>
    </location>
</feature>
<feature type="strand" evidence="10">
    <location>
        <begin position="303"/>
        <end position="306"/>
    </location>
</feature>
<feature type="helix" evidence="10">
    <location>
        <begin position="310"/>
        <end position="312"/>
    </location>
</feature>
<feature type="strand" evidence="10">
    <location>
        <begin position="316"/>
        <end position="319"/>
    </location>
</feature>
<feature type="helix" evidence="10">
    <location>
        <begin position="329"/>
        <end position="337"/>
    </location>
</feature>
<feature type="strand" evidence="10">
    <location>
        <begin position="342"/>
        <end position="344"/>
    </location>
</feature>
<feature type="strand" evidence="10">
    <location>
        <begin position="347"/>
        <end position="349"/>
    </location>
</feature>
<feature type="helix" evidence="10">
    <location>
        <begin position="353"/>
        <end position="361"/>
    </location>
</feature>
<feature type="strand" evidence="10">
    <location>
        <begin position="366"/>
        <end position="368"/>
    </location>
</feature>
<feature type="helix" evidence="10">
    <location>
        <begin position="370"/>
        <end position="373"/>
    </location>
</feature>
<feature type="helix" evidence="10">
    <location>
        <begin position="376"/>
        <end position="390"/>
    </location>
</feature>
<feature type="helix" evidence="10">
    <location>
        <begin position="396"/>
        <end position="420"/>
    </location>
</feature>
<feature type="helix" evidence="10">
    <location>
        <begin position="427"/>
        <end position="446"/>
    </location>
</feature>
<organism>
    <name type="scientific">Clostridium symbiosum</name>
    <name type="common">Bacteroides symbiosus</name>
    <dbReference type="NCBI Taxonomy" id="1512"/>
    <lineage>
        <taxon>Bacteria</taxon>
        <taxon>Bacillati</taxon>
        <taxon>Bacillota</taxon>
        <taxon>Clostridia</taxon>
        <taxon>Lachnospirales</taxon>
        <taxon>Lachnospiraceae</taxon>
    </lineage>
</organism>
<name>DHE2_CLOSY</name>
<evidence type="ECO:0000250" key="1"/>
<evidence type="ECO:0000255" key="2">
    <source>
        <dbReference type="PROSITE-ProRule" id="PRU10011"/>
    </source>
</evidence>
<evidence type="ECO:0000269" key="3">
    <source>
    </source>
</evidence>
<evidence type="ECO:0000269" key="4">
    <source>
    </source>
</evidence>
<evidence type="ECO:0000269" key="5">
    <source>
    </source>
</evidence>
<evidence type="ECO:0000269" key="6">
    <source>
    </source>
</evidence>
<evidence type="ECO:0000269" key="7">
    <source>
    </source>
</evidence>
<evidence type="ECO:0000269" key="8">
    <source ref="11"/>
</evidence>
<evidence type="ECO:0000305" key="9"/>
<evidence type="ECO:0007829" key="10">
    <source>
        <dbReference type="PDB" id="1BGV"/>
    </source>
</evidence>
<keyword id="KW-0002">3D-structure</keyword>
<keyword id="KW-0903">Direct protein sequencing</keyword>
<keyword id="KW-0520">NAD</keyword>
<keyword id="KW-0560">Oxidoreductase</keyword>
<gene>
    <name type="primary">gdh</name>
</gene>
<sequence>MSKYVDRVIAEVEKKYADEPEFVQTVEEVLSSLGPVVDAHPEYEEVALLERMVIPERVIEFRVPWEDDNGKVHVNTGYRVQFNGAIGPYKGGLRFAPSVNLSIMKFLGFEQAFKDSLTTLPMGGAKGGSDFDPNGKSDREVMRFCQAFMTELYRHIGPDIDVPAGDLGVGAREIGYMYGQYRKIVGGFYNGVLTGKARSFGGSLVRPEATGYGSVYYVEAVMKHENDTLVGKTVALAGFGNVAWGAAKKLAELGAKAVTLSGPDGYIYDPEGITTEEKINYMLEMRASGRNKVQDYADKFGVQFFPGEKPWGQKVDIIMPCATQNDVDLEQAKKIVANNVKYYIEVANMPTTNEALRFLMQQPNMVVAPSKAVNAGGVLVSGFEMSQNSERLSWTAEEVDSKLHQVMTDIHDGSAAAAERYGLGYNLVAGANIVGFQKIADAMMAQGIAW</sequence>
<reference key="1">
    <citation type="journal article" date="1992" name="Eur. J. Biochem.">
        <title>The glutamate dehydrogenase gene of Clostridium symbiosum. Cloning by polymerase chain reaction, sequence analysis and over-expression in Escherichia coli.</title>
        <authorList>
            <person name="Teller J.K."/>
            <person name="Smith R.M."/>
            <person name="McPherson M.J."/>
            <person name="Engel P.C."/>
            <person name="Guest J.R."/>
        </authorList>
    </citation>
    <scope>NUCLEOTIDE SEQUENCE [GENOMIC DNA]</scope>
</reference>
<reference key="2">
    <citation type="journal article" date="1991" name="Biochim. Biophys. Acta">
        <title>The partial amino acid sequence of the NAD(+)-dependent glutamate dehydrogenase of Clostridium symbiosum: implications for the evolution and structural basis of coenzyme specificity.</title>
        <authorList>
            <person name="Lilley K.S."/>
            <person name="Baker P.J."/>
            <person name="Britton K.L."/>
            <person name="Stillman T.J."/>
            <person name="Brown P.E."/>
            <person name="Moir A.J.G."/>
            <person name="Engel P.C."/>
            <person name="Rice D.W."/>
            <person name="Bell J.E."/>
            <person name="Bell E."/>
        </authorList>
    </citation>
    <scope>PRELIMINARY PARTIAL PROTEIN SEQUENCE</scope>
</reference>
<reference key="3">
    <citation type="journal article" date="1992" name="Eur. J. Biochem.">
        <title>The essential active-site lysines of clostridial glutamate dehydrogenase. A study with pyridoxal-5'-phosphate.</title>
        <authorList>
            <person name="Lilley K.S."/>
            <person name="Engel P.C."/>
        </authorList>
    </citation>
    <scope>PARTIAL PROTEIN SEQUENCE</scope>
    <scope>MODIFICATION OF SOME LYSINES</scope>
</reference>
<reference key="4">
    <citation type="journal article" date="1994" name="Biochem. J.">
        <title>The catalytic role of aspartate in the active site of glutamate dehydrogenase.</title>
        <authorList>
            <person name="Dean J.L."/>
            <person name="Wang X.G."/>
            <person name="Teller J.K."/>
            <person name="Waugh M.L."/>
            <person name="Britton K.L."/>
            <person name="Baker P.J."/>
            <person name="Stillman T.J."/>
            <person name="Martin S.R."/>
            <person name="Rice D.W."/>
            <person name="Engel P.C."/>
        </authorList>
    </citation>
    <scope>PROTEIN SEQUENCE OF 2-11</scope>
    <scope>MUTAGENESIS OF ASP-166</scope>
    <scope>BIOPHYSICOCHEMICAL PROPERTIES</scope>
</reference>
<reference key="5">
    <citation type="journal article" date="1994" name="Biochem. J.">
        <title>Site and significance of chemically modifiable cysteine residues in glutamate dehydrogenase of Clostridium symbiosum and the use of protection studies to measure coenzyme binding.</title>
        <authorList>
            <person name="Syed S.E."/>
            <person name="Hornby D.P."/>
            <person name="Brown P.E."/>
            <person name="Fitton J.E."/>
            <person name="Engel P.C."/>
        </authorList>
    </citation>
    <scope>PROTEIN SEQUENCE OF 26-46; 154-158; 165-182 AND 325-339</scope>
</reference>
<reference key="6">
    <citation type="journal article" date="1992" name="Proteins">
        <title>Subunit assembly and active site location in the structure of glutamate dehydrogenase.</title>
        <authorList>
            <person name="Baker P.J."/>
            <person name="Britton K.L."/>
            <person name="Engel P.C."/>
            <person name="Farrants G.W."/>
            <person name="Lilley K.S."/>
            <person name="Rice D.W."/>
            <person name="Stillman T.J."/>
        </authorList>
    </citation>
    <scope>X-RAY CRYSTALLOGRAPHY (1.96 ANGSTROMS)</scope>
    <scope>SUBUNIT</scope>
</reference>
<reference key="7">
    <citation type="journal article" date="1993" name="J. Mol. Biol.">
        <title>Conformational flexibility in glutamate dehydrogenase. Role of water in substrate recognition and catalysis.</title>
        <authorList>
            <person name="Stillman T.J."/>
            <person name="Baker P.J."/>
            <person name="Britton K.L."/>
            <person name="Rice D.W."/>
        </authorList>
    </citation>
    <scope>X-RAY CRYSTALLOGRAPHY (1.90 ANGSTROMS) OF 2-450 IN COMPLEX WITH SUBSTRATE</scope>
    <scope>ACTIVE SITE</scope>
</reference>
<reference key="8">
    <citation type="journal article" date="1995" name="Structure">
        <title>The structure of Pyrococcus furiosus glutamate dehydrogenase reveals a key role for ion-pair networks in maintaining enzyme stability at extreme temperatures.</title>
        <authorList>
            <person name="Yip K.S.P."/>
            <person name="Stillman T.J."/>
            <person name="Britton K.L."/>
            <person name="Artymiuk P.J."/>
            <person name="Baker P.J."/>
            <person name="Sedelnikova S.E."/>
            <person name="Engel P.C."/>
            <person name="Pasquo A."/>
            <person name="Chiaraluce R."/>
            <person name="Consalvi V."/>
            <person name="Scandurra R."/>
            <person name="Rice D.W."/>
        </authorList>
    </citation>
    <scope>X-RAY CRYSTALLOGRAPHY (1.96 ANGSTROMS) OF 2-449</scope>
</reference>
<reference key="9">
    <citation type="journal article" date="1997" name="Biochemistry">
        <title>Determinants of substrate specificity in the superfamily of amino acid dehydrogenases.</title>
        <authorList>
            <person name="Baker P.J."/>
            <person name="Waugh M.L."/>
            <person name="Wang X.G."/>
            <person name="Stillman T.J."/>
            <person name="Turnbull A.P."/>
            <person name="Engel P.C."/>
            <person name="Rice D.W."/>
        </authorList>
    </citation>
    <scope>X-RAY CRYSTALLOGRAPHY (2.5 ANGSTROMS) OF 2-450</scope>
    <scope>MUTAGENESIS OF LYS-90 AND SER-381</scope>
    <scope>SUBSTRATE SPECIFICITY</scope>
    <scope>SUBUNIT</scope>
</reference>
<reference key="10">
    <citation type="journal article" date="1999" name="J. Mol. Biol.">
        <title>Insights into the mechanism of domain closure and substrate specificity of glutamate dehydrogenase from Clostridium symbiosum.</title>
        <authorList>
            <person name="Stillman T.J."/>
            <person name="Migueis A.M."/>
            <person name="Wang X.G."/>
            <person name="Baker P.J."/>
            <person name="Britton K.L."/>
            <person name="Engel P.C."/>
            <person name="Rice D.W."/>
        </authorList>
    </citation>
    <scope>X-RAY CRYSTALLOGRAPHY (2.05 ANGSTROMS) OF 2-449 OF MUTANT LEU-90</scope>
    <scope>SUBSTRATE SPECIFICITY</scope>
    <scope>MUTAGENESIS OF LYS-90</scope>
</reference>
<reference key="11">
    <citation type="submission" date="2011-04" db="PDB data bank">
        <title>Structural determinants of cofactor specificity and domain flexibility in bacterial glutamate dehydrogenases.</title>
        <authorList>
            <person name="Oliveira T."/>
            <person name="Sharkey M.A."/>
            <person name="Hamza M."/>
            <person name="Engel P.C."/>
            <person name="Khan A.R."/>
        </authorList>
    </citation>
    <scope>X-RAY CRYSTALLOGRAPHY (2.7 ANGSTROMS)</scope>
    <scope>SUBUNIT</scope>
</reference>
<protein>
    <recommendedName>
        <fullName>NAD-specific glutamate dehydrogenase</fullName>
        <shortName>NAD-GDH</shortName>
        <ecNumber>1.4.1.2</ecNumber>
    </recommendedName>
</protein>
<proteinExistence type="evidence at protein level"/>
<comment type="catalytic activity">
    <reaction>
        <text>L-glutamate + NAD(+) + H2O = 2-oxoglutarate + NH4(+) + NADH + H(+)</text>
        <dbReference type="Rhea" id="RHEA:15133"/>
        <dbReference type="ChEBI" id="CHEBI:15377"/>
        <dbReference type="ChEBI" id="CHEBI:15378"/>
        <dbReference type="ChEBI" id="CHEBI:16810"/>
        <dbReference type="ChEBI" id="CHEBI:28938"/>
        <dbReference type="ChEBI" id="CHEBI:29985"/>
        <dbReference type="ChEBI" id="CHEBI:57540"/>
        <dbReference type="ChEBI" id="CHEBI:57945"/>
        <dbReference type="EC" id="1.4.1.2"/>
    </reaction>
</comment>
<comment type="biophysicochemical properties">
    <kinetics>
        <KM evidence="4">10.8 uM for NADH (at 25 degrees Celsius and at pH 7)</KM>
        <KM evidence="4">0.31 mM for 2-oxoglutarate (at 25 degrees Celsius and at pH 7)</KM>
        <KM evidence="4">61.1 mM for ammonium (at 25 degrees Celsius and at pH 7)</KM>
        <Vmax evidence="4">125.0 umol/min/mg enzyme for NADH (at 25 degrees Celsius and at pH 7)</Vmax>
        <Vmax evidence="4">191.0 umol/min/mg enzyme for 2-oxoglutarate (at 25 degrees Celsius and at pH 7)</Vmax>
        <Vmax evidence="4">296.0 umol/min/mg enzyme for ammonium (at 25 degrees Celsius and at pH 7)</Vmax>
    </kinetics>
</comment>
<comment type="pathway">
    <text>Amino-acid degradation; L-glutamate degradation via hydroxyglutarate pathway; crotonoyl-CoA from L-glutamate: step 1/5.</text>
</comment>
<comment type="subunit">
    <text evidence="3 5 6 8">Homohexamer.</text>
</comment>
<comment type="similarity">
    <text evidence="9">Belongs to the Glu/Leu/Phe/Val dehydrogenases family.</text>
</comment>